<organism>
    <name type="scientific">Ranoidea dahlii</name>
    <name type="common">Dahl's aquatic frog</name>
    <name type="synonym">Litoria dahlii</name>
    <dbReference type="NCBI Taxonomy" id="299727"/>
    <lineage>
        <taxon>Eukaryota</taxon>
        <taxon>Metazoa</taxon>
        <taxon>Chordata</taxon>
        <taxon>Craniata</taxon>
        <taxon>Vertebrata</taxon>
        <taxon>Euteleostomi</taxon>
        <taxon>Amphibia</taxon>
        <taxon>Batrachia</taxon>
        <taxon>Anura</taxon>
        <taxon>Neobatrachia</taxon>
        <taxon>Hyloidea</taxon>
        <taxon>Hylidae</taxon>
        <taxon>Pelodryadinae</taxon>
        <taxon>Ranoidea</taxon>
    </lineage>
</organism>
<comment type="function">
    <text evidence="1">Has no antimicrobial activity.</text>
</comment>
<comment type="subcellular location">
    <subcellularLocation>
        <location evidence="1">Secreted</location>
    </subcellularLocation>
</comment>
<comment type="tissue specificity">
    <text evidence="1">Expressed by the skin dorsal glands.</text>
</comment>
<comment type="mass spectrometry" mass="2486.0" method="Electrospray" evidence="1"/>
<feature type="peptide" id="PRO_0000043775" description="Dahlein-4.2">
    <location>
        <begin position="1"/>
        <end position="23"/>
    </location>
</feature>
<proteinExistence type="evidence at protein level"/>
<sequence length="23" mass="2490">GLWQLIKDKLKDAATGFVTGIQS</sequence>
<protein>
    <recommendedName>
        <fullName>Dahlein-4.2</fullName>
    </recommendedName>
</protein>
<reference evidence="2" key="1">
    <citation type="journal article" date="2001" name="Rapid Commun. Mass Spectrom.">
        <title>Bioactive dahlein peptides from the skin secretions of the Australian aquatic frog Litoria dahlii: sequence determination by electrospray mass spectrometry.</title>
        <authorList>
            <person name="Wegener K.L."/>
            <person name="Brinkworth C.S."/>
            <person name="Bowie J.H."/>
            <person name="Wallace J.C."/>
            <person name="Tyler M.J."/>
        </authorList>
    </citation>
    <scope>PROTEIN SEQUENCE</scope>
    <scope>FUNCTION</scope>
    <scope>SUBCELLULAR LOCATION</scope>
    <scope>TISSUE SPECIFICITY</scope>
    <scope>MASS SPECTROMETRY</scope>
    <source>
        <tissue evidence="1">Skin secretion</tissue>
    </source>
</reference>
<evidence type="ECO:0000269" key="1">
    <source>
    </source>
</evidence>
<evidence type="ECO:0000305" key="2"/>
<name>DAH42_RANDH</name>
<dbReference type="GO" id="GO:0005576">
    <property type="term" value="C:extracellular region"/>
    <property type="evidence" value="ECO:0000314"/>
    <property type="project" value="UniProtKB"/>
</dbReference>
<dbReference type="GO" id="GO:0006952">
    <property type="term" value="P:defense response"/>
    <property type="evidence" value="ECO:0007669"/>
    <property type="project" value="UniProtKB-KW"/>
</dbReference>
<keyword id="KW-0878">Amphibian defense peptide</keyword>
<keyword id="KW-0903">Direct protein sequencing</keyword>
<keyword id="KW-0964">Secreted</keyword>
<accession>P84265</accession>